<reference key="1">
    <citation type="journal article" date="2002" name="J. Mol. Microbiol. Biotechnol.">
        <title>The genome of Methanosarcina mazei: evidence for lateral gene transfer between Bacteria and Archaea.</title>
        <authorList>
            <person name="Deppenmeier U."/>
            <person name="Johann A."/>
            <person name="Hartsch T."/>
            <person name="Merkl R."/>
            <person name="Schmitz R.A."/>
            <person name="Martinez-Arias R."/>
            <person name="Henne A."/>
            <person name="Wiezer A."/>
            <person name="Baeumer S."/>
            <person name="Jacobi C."/>
            <person name="Brueggemann H."/>
            <person name="Lienard T."/>
            <person name="Christmann A."/>
            <person name="Boemecke M."/>
            <person name="Steckel S."/>
            <person name="Bhattacharyya A."/>
            <person name="Lykidis A."/>
            <person name="Overbeek R."/>
            <person name="Klenk H.-P."/>
            <person name="Gunsalus R.P."/>
            <person name="Fritz H.-J."/>
            <person name="Gottschalk G."/>
        </authorList>
    </citation>
    <scope>NUCLEOTIDE SEQUENCE [LARGE SCALE GENOMIC DNA]</scope>
    <source>
        <strain>ATCC BAA-159 / DSM 3647 / Goe1 / Go1 / JCM 11833 / OCM 88</strain>
    </source>
</reference>
<dbReference type="EC" id="2.1.1.250"/>
<dbReference type="EMBL" id="AE008384">
    <property type="protein sequence ID" value="AAM31384.1"/>
    <property type="status" value="ALT_SEQ"/>
    <property type="molecule type" value="Genomic_DNA"/>
</dbReference>
<dbReference type="EMBL" id="AE008384">
    <property type="protein sequence ID" value="AAM31385.1"/>
    <property type="status" value="ALT_SEQ"/>
    <property type="molecule type" value="Genomic_DNA"/>
</dbReference>
<dbReference type="KEGG" id="mma:MM_1688"/>
<dbReference type="KEGG" id="mma:MM_1689"/>
<dbReference type="PATRIC" id="fig|192952.21.peg.1958"/>
<dbReference type="eggNOG" id="arCOG03406">
    <property type="taxonomic scope" value="Archaea"/>
</dbReference>
<dbReference type="HOGENOM" id="CLU_841265_0_0_2"/>
<dbReference type="BRENDA" id="2.1.1.250">
    <property type="organism ID" value="3270"/>
</dbReference>
<dbReference type="UniPathway" id="UPA00645"/>
<dbReference type="Proteomes" id="UP000000595">
    <property type="component" value="Chromosome"/>
</dbReference>
<dbReference type="GO" id="GO:0043834">
    <property type="term" value="F:trimethylamine methyltransferase activity"/>
    <property type="evidence" value="ECO:0007669"/>
    <property type="project" value="UniProtKB-EC"/>
</dbReference>
<dbReference type="GO" id="GO:0015948">
    <property type="term" value="P:methanogenesis"/>
    <property type="evidence" value="ECO:0007669"/>
    <property type="project" value="UniProtKB-KW"/>
</dbReference>
<dbReference type="GO" id="GO:0032259">
    <property type="term" value="P:methylation"/>
    <property type="evidence" value="ECO:0007669"/>
    <property type="project" value="UniProtKB-KW"/>
</dbReference>
<dbReference type="FunFam" id="3.20.20.480:FF:000001">
    <property type="entry name" value="Trimethylamine methyltransferase"/>
    <property type="match status" value="1"/>
</dbReference>
<dbReference type="Gene3D" id="3.20.20.480">
    <property type="entry name" value="Trimethylamine methyltransferase-like"/>
    <property type="match status" value="1"/>
</dbReference>
<dbReference type="InterPro" id="IPR038601">
    <property type="entry name" value="MttB-like_sf"/>
</dbReference>
<dbReference type="InterPro" id="IPR012740">
    <property type="entry name" value="MttB_Methanosar"/>
</dbReference>
<dbReference type="InterPro" id="IPR010426">
    <property type="entry name" value="MTTB_MeTrfase"/>
</dbReference>
<dbReference type="NCBIfam" id="TIGR02369">
    <property type="entry name" value="trimeth_pyl"/>
    <property type="match status" value="1"/>
</dbReference>
<dbReference type="Pfam" id="PF06253">
    <property type="entry name" value="MTTB"/>
    <property type="match status" value="1"/>
</dbReference>
<dbReference type="PIRSF" id="PIRSF037567">
    <property type="entry name" value="MTTB_MeTrfase"/>
    <property type="match status" value="1"/>
</dbReference>
<feature type="chain" id="PRO_0000216574" description="Trimethylamine methyltransferase MttB1">
    <location>
        <begin position="1"/>
        <end position="495"/>
    </location>
</feature>
<feature type="non-standard amino acid" description="Pyrrolysine" evidence="1">
    <location>
        <position position="334"/>
    </location>
</feature>
<evidence type="ECO:0000250" key="1"/>
<evidence type="ECO:0000305" key="2"/>
<gene>
    <name type="primary">mttB1</name>
    <name type="ordered locus">MM_1688/MM_1689</name>
</gene>
<name>MTTB1_METMA</name>
<proteinExistence type="inferred from homology"/>
<protein>
    <recommendedName>
        <fullName>Trimethylamine methyltransferase MttB1</fullName>
        <shortName>TMA methyltransferase 1</shortName>
        <ecNumber>2.1.1.250</ecNumber>
    </recommendedName>
    <alternativeName>
        <fullName>Trimethylamine--corrinoid protein methyltransferase 1</fullName>
    </alternativeName>
</protein>
<accession>P58973</accession>
<keyword id="KW-0484">Methanogenesis</keyword>
<keyword id="KW-0489">Methyltransferase</keyword>
<keyword id="KW-0669">Pyrrolysine</keyword>
<keyword id="KW-0808">Transferase</keyword>
<organism>
    <name type="scientific">Methanosarcina mazei (strain ATCC BAA-159 / DSM 3647 / Goe1 / Go1 / JCM 11833 / OCM 88)</name>
    <name type="common">Methanosarcina frisia</name>
    <dbReference type="NCBI Taxonomy" id="192952"/>
    <lineage>
        <taxon>Archaea</taxon>
        <taxon>Methanobacteriati</taxon>
        <taxon>Methanobacteriota</taxon>
        <taxon>Stenosarchaea group</taxon>
        <taxon>Methanomicrobia</taxon>
        <taxon>Methanosarcinales</taxon>
        <taxon>Methanosarcinaceae</taxon>
        <taxon>Methanosarcina</taxon>
    </lineage>
</organism>
<sequence>MAKCNAVAGFNALNGVQLNLFTTDELKAIHYATMEVLMDPGIQVSDPEARQIFKENGCEVNEQTNVVKIPEYLVRRALQLAPSRFVLWGRDKKYNTVQEAGGKVHWTCFGTGVKMCKYQEGKYVTVDSVEQDIADIAKLCDWAENIDYFSLPVSARDIAGQGAQDVHETFTPLTNTAKHFHHIDPVGENVEYYRDIVNAYYGGDEEEARKKPIFSMLLCPTSPLELSVNACQVIIKGARFGMPVNVLSMAMSGGSSPVYLAGTLVTHNAEVLAGITLAQLTVPGAKVWYGSSTTTFDLKKGTAPVGSPELGLISASVAKLAQFYGLPAFVAGTOSDAKIPDNQAGHEKTMTCLLPALAGANTLYGAGMLELGMTFSMEQLVIDNDIIKMTKKALQGVPVNEETLAVESIQKVGIGNNFLALKQTRQLVNYPSDPMLIDRRMFGDWAAAGSKDLAAAAHEKVVDVLKNHVVKPIDADILKDMKAVVDKADKAFRGM</sequence>
<comment type="function">
    <text evidence="1">Catalyzes the transfer of a methyl group from trimethylamine to the corrinoid cofactor of MttC.</text>
</comment>
<comment type="catalytic activity">
    <reaction>
        <text>Co(I)-[trimethylamine-specific corrinoid protein] + trimethylamine + H(+) = methyl-Co(III)-[trimethylamine-specific corrinoid protein] + dimethylamine</text>
        <dbReference type="Rhea" id="RHEA:39287"/>
        <dbReference type="Rhea" id="RHEA-COMP:11124"/>
        <dbReference type="Rhea" id="RHEA-COMP:11126"/>
        <dbReference type="ChEBI" id="CHEBI:15378"/>
        <dbReference type="ChEBI" id="CHEBI:58040"/>
        <dbReference type="ChEBI" id="CHEBI:58389"/>
        <dbReference type="ChEBI" id="CHEBI:85033"/>
        <dbReference type="ChEBI" id="CHEBI:85035"/>
        <dbReference type="EC" id="2.1.1.250"/>
    </reaction>
</comment>
<comment type="pathway">
    <text>One-carbon metabolism; methanogenesis from trimethylamine.</text>
</comment>
<comment type="subunit">
    <text evidence="1">Can form a complex with MttC.</text>
</comment>
<comment type="similarity">
    <text evidence="2">Belongs to the trimethylamine methyltransferase family.</text>
</comment>
<comment type="sequence caution" evidence="2">
    <conflict type="erroneous termination">
        <sequence resource="EMBL-CDS" id="AAM31384"/>
    </conflict>
    <text>Truncated C-terminus.</text>
</comment>
<comment type="sequence caution" evidence="2">
    <conflict type="erroneous termination">
        <sequence resource="EMBL-CDS" id="AAM31385"/>
    </conflict>
    <text>Truncated C-terminus.</text>
</comment>